<feature type="chain" id="PRO_1000099878" description="Probable malate:quinone oxidoreductase">
    <location>
        <begin position="1"/>
        <end position="500"/>
    </location>
</feature>
<dbReference type="EC" id="1.1.5.4" evidence="1"/>
<dbReference type="EMBL" id="CP000878">
    <property type="protein sequence ID" value="ABX08348.1"/>
    <property type="molecule type" value="Genomic_DNA"/>
</dbReference>
<dbReference type="RefSeq" id="WP_012194971.1">
    <property type="nucleotide sequence ID" value="NC_009976.1"/>
</dbReference>
<dbReference type="SMR" id="A9BE38"/>
<dbReference type="STRING" id="93059.P9211_04171"/>
<dbReference type="KEGG" id="pmj:P9211_04171"/>
<dbReference type="eggNOG" id="COG0579">
    <property type="taxonomic scope" value="Bacteria"/>
</dbReference>
<dbReference type="HOGENOM" id="CLU_028151_0_0_3"/>
<dbReference type="OrthoDB" id="9763983at2"/>
<dbReference type="UniPathway" id="UPA00223">
    <property type="reaction ID" value="UER01008"/>
</dbReference>
<dbReference type="Proteomes" id="UP000000788">
    <property type="component" value="Chromosome"/>
</dbReference>
<dbReference type="GO" id="GO:0047545">
    <property type="term" value="F:2-hydroxyglutarate dehydrogenase activity"/>
    <property type="evidence" value="ECO:0007669"/>
    <property type="project" value="TreeGrafter"/>
</dbReference>
<dbReference type="GO" id="GO:0008924">
    <property type="term" value="F:L-malate dehydrogenase (quinone) activity"/>
    <property type="evidence" value="ECO:0007669"/>
    <property type="project" value="UniProtKB-UniRule"/>
</dbReference>
<dbReference type="GO" id="GO:0006099">
    <property type="term" value="P:tricarboxylic acid cycle"/>
    <property type="evidence" value="ECO:0007669"/>
    <property type="project" value="UniProtKB-UniRule"/>
</dbReference>
<dbReference type="Gene3D" id="3.30.9.10">
    <property type="entry name" value="D-Amino Acid Oxidase, subunit A, domain 2"/>
    <property type="match status" value="1"/>
</dbReference>
<dbReference type="Gene3D" id="3.50.50.60">
    <property type="entry name" value="FAD/NAD(P)-binding domain"/>
    <property type="match status" value="1"/>
</dbReference>
<dbReference type="HAMAP" id="MF_00212">
    <property type="entry name" value="MQO"/>
    <property type="match status" value="1"/>
</dbReference>
<dbReference type="InterPro" id="IPR036188">
    <property type="entry name" value="FAD/NAD-bd_sf"/>
</dbReference>
<dbReference type="InterPro" id="IPR006231">
    <property type="entry name" value="MQO"/>
</dbReference>
<dbReference type="NCBIfam" id="TIGR01320">
    <property type="entry name" value="mal_quin_oxido"/>
    <property type="match status" value="1"/>
</dbReference>
<dbReference type="NCBIfam" id="NF003606">
    <property type="entry name" value="PRK05257.2-1"/>
    <property type="match status" value="1"/>
</dbReference>
<dbReference type="NCBIfam" id="NF003607">
    <property type="entry name" value="PRK05257.2-3"/>
    <property type="match status" value="1"/>
</dbReference>
<dbReference type="NCBIfam" id="NF003611">
    <property type="entry name" value="PRK05257.3-2"/>
    <property type="match status" value="1"/>
</dbReference>
<dbReference type="PANTHER" id="PTHR43104">
    <property type="entry name" value="L-2-HYDROXYGLUTARATE DEHYDROGENASE, MITOCHONDRIAL"/>
    <property type="match status" value="1"/>
</dbReference>
<dbReference type="PANTHER" id="PTHR43104:SF2">
    <property type="entry name" value="L-2-HYDROXYGLUTARATE DEHYDROGENASE, MITOCHONDRIAL"/>
    <property type="match status" value="1"/>
</dbReference>
<dbReference type="Pfam" id="PF06039">
    <property type="entry name" value="Mqo"/>
    <property type="match status" value="1"/>
</dbReference>
<dbReference type="SUPFAM" id="SSF51905">
    <property type="entry name" value="FAD/NAD(P)-binding domain"/>
    <property type="match status" value="1"/>
</dbReference>
<accession>A9BE38</accession>
<organism>
    <name type="scientific">Prochlorococcus marinus (strain MIT 9211)</name>
    <dbReference type="NCBI Taxonomy" id="93059"/>
    <lineage>
        <taxon>Bacteria</taxon>
        <taxon>Bacillati</taxon>
        <taxon>Cyanobacteriota</taxon>
        <taxon>Cyanophyceae</taxon>
        <taxon>Synechococcales</taxon>
        <taxon>Prochlorococcaceae</taxon>
        <taxon>Prochlorococcus</taxon>
    </lineage>
</organism>
<protein>
    <recommendedName>
        <fullName evidence="1">Probable malate:quinone oxidoreductase</fullName>
        <ecNumber evidence="1">1.1.5.4</ecNumber>
    </recommendedName>
    <alternativeName>
        <fullName evidence="1">MQO</fullName>
    </alternativeName>
    <alternativeName>
        <fullName evidence="1">Malate dehydrogenase [quinone]</fullName>
    </alternativeName>
</protein>
<evidence type="ECO:0000255" key="1">
    <source>
        <dbReference type="HAMAP-Rule" id="MF_00212"/>
    </source>
</evidence>
<name>MQO_PROM4</name>
<gene>
    <name evidence="1" type="primary">mqo</name>
    <name type="ordered locus">P9211_04171</name>
</gene>
<keyword id="KW-0274">FAD</keyword>
<keyword id="KW-0285">Flavoprotein</keyword>
<keyword id="KW-0560">Oxidoreductase</keyword>
<keyword id="KW-1185">Reference proteome</keyword>
<keyword id="KW-0816">Tricarboxylic acid cycle</keyword>
<reference key="1">
    <citation type="journal article" date="2007" name="PLoS Genet.">
        <title>Patterns and implications of gene gain and loss in the evolution of Prochlorococcus.</title>
        <authorList>
            <person name="Kettler G.C."/>
            <person name="Martiny A.C."/>
            <person name="Huang K."/>
            <person name="Zucker J."/>
            <person name="Coleman M.L."/>
            <person name="Rodrigue S."/>
            <person name="Chen F."/>
            <person name="Lapidus A."/>
            <person name="Ferriera S."/>
            <person name="Johnson J."/>
            <person name="Steglich C."/>
            <person name="Church G.M."/>
            <person name="Richardson P."/>
            <person name="Chisholm S.W."/>
        </authorList>
    </citation>
    <scope>NUCLEOTIDE SEQUENCE [LARGE SCALE GENOMIC DNA]</scope>
    <source>
        <strain>MIT 9211</strain>
    </source>
</reference>
<sequence>MFISEAIGPEDRFDAVLIGAGIMSSTLAVLLHELDPCMRILIVERLDSPALESTSAFNNSGTGHAANCEFNYTPLQSNGRIEIEKALSINSSFERSLEFWASLAEMGRISPATFLNFLPHISFVWKEADLDFLKQRYLQLSSEVAFQRMEWSDDKAELKEWMPIVMQGRPTSEKVAATRIQRGTDVDFGALTRAYFDSLEESGSVHIRLSTEVIDIQRFGQDPWKLFLKSDLNSYCVEGKFVFLGAGGGALSLLQKSGIPEGKFYGGFPVSGQWLVCNETQVTNNHNAKVYGNADVGSPPMSVPHLDTRWIRGRKSLLFGPFAGFNTKFLKYGSNWDLFRSIQMGNVGAMVQAGLENIDLIKYLYGQLQQDHISRVDSLQNFLPNAKSKDWHLSLAGQRVQIIKKTSKGGKLKMGTEMVSSSDGSLAALLGASPGASTAVAIMIDLLRSSWGEKMSTKIWQDRLRRLIPSFGEDLNSNESMLKATRDRNDSLLGFGEKNQ</sequence>
<proteinExistence type="inferred from homology"/>
<comment type="catalytic activity">
    <reaction evidence="1">
        <text>(S)-malate + a quinone = a quinol + oxaloacetate</text>
        <dbReference type="Rhea" id="RHEA:46012"/>
        <dbReference type="ChEBI" id="CHEBI:15589"/>
        <dbReference type="ChEBI" id="CHEBI:16452"/>
        <dbReference type="ChEBI" id="CHEBI:24646"/>
        <dbReference type="ChEBI" id="CHEBI:132124"/>
        <dbReference type="EC" id="1.1.5.4"/>
    </reaction>
</comment>
<comment type="cofactor">
    <cofactor evidence="1">
        <name>FAD</name>
        <dbReference type="ChEBI" id="CHEBI:57692"/>
    </cofactor>
</comment>
<comment type="pathway">
    <text evidence="1">Carbohydrate metabolism; tricarboxylic acid cycle; oxaloacetate from (S)-malate (quinone route): step 1/1.</text>
</comment>
<comment type="similarity">
    <text evidence="1">Belongs to the MQO family.</text>
</comment>